<reference key="1">
    <citation type="journal article" date="2008" name="BMC Genomics">
        <title>Genome sequence and rapid evolution of the rice pathogen Xanthomonas oryzae pv. oryzae PXO99A.</title>
        <authorList>
            <person name="Salzberg S.L."/>
            <person name="Sommer D.D."/>
            <person name="Schatz M.C."/>
            <person name="Phillippy A.M."/>
            <person name="Rabinowicz P.D."/>
            <person name="Tsuge S."/>
            <person name="Furutani A."/>
            <person name="Ochiai H."/>
            <person name="Delcher A.L."/>
            <person name="Kelley D."/>
            <person name="Madupu R."/>
            <person name="Puiu D."/>
            <person name="Radune D."/>
            <person name="Shumway M."/>
            <person name="Trapnell C."/>
            <person name="Aparna G."/>
            <person name="Jha G."/>
            <person name="Pandey A."/>
            <person name="Patil P.B."/>
            <person name="Ishihara H."/>
            <person name="Meyer D.F."/>
            <person name="Szurek B."/>
            <person name="Verdier V."/>
            <person name="Koebnik R."/>
            <person name="Dow J.M."/>
            <person name="Ryan R.P."/>
            <person name="Hirata H."/>
            <person name="Tsuyumu S."/>
            <person name="Won Lee S."/>
            <person name="Seo Y.-S."/>
            <person name="Sriariyanum M."/>
            <person name="Ronald P.C."/>
            <person name="Sonti R.V."/>
            <person name="Van Sluys M.-A."/>
            <person name="Leach J.E."/>
            <person name="White F.F."/>
            <person name="Bogdanove A.J."/>
        </authorList>
    </citation>
    <scope>NUCLEOTIDE SEQUENCE [LARGE SCALE GENOMIC DNA]</scope>
    <source>
        <strain>PXO99A</strain>
    </source>
</reference>
<comment type="function">
    <text evidence="1">Catalyzes the 2-thiolation of uridine at the wobble position (U34) of tRNA, leading to the formation of s(2)U34.</text>
</comment>
<comment type="catalytic activity">
    <reaction evidence="1">
        <text>S-sulfanyl-L-cysteinyl-[protein] + uridine(34) in tRNA + AH2 + ATP = 2-thiouridine(34) in tRNA + L-cysteinyl-[protein] + A + AMP + diphosphate + H(+)</text>
        <dbReference type="Rhea" id="RHEA:47032"/>
        <dbReference type="Rhea" id="RHEA-COMP:10131"/>
        <dbReference type="Rhea" id="RHEA-COMP:11726"/>
        <dbReference type="Rhea" id="RHEA-COMP:11727"/>
        <dbReference type="Rhea" id="RHEA-COMP:11728"/>
        <dbReference type="ChEBI" id="CHEBI:13193"/>
        <dbReference type="ChEBI" id="CHEBI:15378"/>
        <dbReference type="ChEBI" id="CHEBI:17499"/>
        <dbReference type="ChEBI" id="CHEBI:29950"/>
        <dbReference type="ChEBI" id="CHEBI:30616"/>
        <dbReference type="ChEBI" id="CHEBI:33019"/>
        <dbReference type="ChEBI" id="CHEBI:61963"/>
        <dbReference type="ChEBI" id="CHEBI:65315"/>
        <dbReference type="ChEBI" id="CHEBI:87170"/>
        <dbReference type="ChEBI" id="CHEBI:456215"/>
        <dbReference type="EC" id="2.8.1.13"/>
    </reaction>
</comment>
<comment type="subcellular location">
    <subcellularLocation>
        <location evidence="1">Cytoplasm</location>
    </subcellularLocation>
</comment>
<comment type="similarity">
    <text evidence="1">Belongs to the MnmA/TRMU family.</text>
</comment>
<gene>
    <name evidence="1" type="primary">mnmA1</name>
    <name type="ordered locus">PXO_01026</name>
</gene>
<gene>
    <name evidence="1" type="primary">mnmA2</name>
    <name type="ordered locus">PXO_06140</name>
</gene>
<name>MNMA_XANOP</name>
<organism>
    <name type="scientific">Xanthomonas oryzae pv. oryzae (strain PXO99A)</name>
    <dbReference type="NCBI Taxonomy" id="360094"/>
    <lineage>
        <taxon>Bacteria</taxon>
        <taxon>Pseudomonadati</taxon>
        <taxon>Pseudomonadota</taxon>
        <taxon>Gammaproteobacteria</taxon>
        <taxon>Lysobacterales</taxon>
        <taxon>Lysobacteraceae</taxon>
        <taxon>Xanthomonas</taxon>
    </lineage>
</organism>
<evidence type="ECO:0000255" key="1">
    <source>
        <dbReference type="HAMAP-Rule" id="MF_00144"/>
    </source>
</evidence>
<protein>
    <recommendedName>
        <fullName evidence="1">tRNA-specific 2-thiouridylase MnmA</fullName>
        <ecNumber evidence="1">2.8.1.13</ecNumber>
    </recommendedName>
</protein>
<sequence>MSTPHIVVGVSGGVDSSVAAWKLAQQGEPIAGLFMQNWADDGSGDCRAEDDRRDAVAVCGVLGMPFHFRDFSGEYWSGVFEHFLAEYAAGRTPNPDVLCNREVKFKHFLDAAQALGAERIATGHYAQVAHRGGRWRLLRGADRDKDQSYFLHQLGQSQLAATLFPIGDLEKSTLRRIARDAGLPTHAKKDSTGICFIGERDFREFLGRYLPARTGEIRDPQGQRIAEHPGVFYFTLGQREGLNIGGVRGRAAAPWYVVGKDVASNVLYVDQDRDSPLLQSRWLQSEQAHWVTGAPPARRFSCTAQTRYRQPDEPCTVDVQDDGSVQVHFERPQRAVTPGQSLVLYDGKECLGGAVIAATDAPLERQLAGSSFSSEVVA</sequence>
<keyword id="KW-0067">ATP-binding</keyword>
<keyword id="KW-0963">Cytoplasm</keyword>
<keyword id="KW-1015">Disulfide bond</keyword>
<keyword id="KW-0547">Nucleotide-binding</keyword>
<keyword id="KW-0694">RNA-binding</keyword>
<keyword id="KW-0808">Transferase</keyword>
<keyword id="KW-0819">tRNA processing</keyword>
<keyword id="KW-0820">tRNA-binding</keyword>
<accession>B2SMD7</accession>
<feature type="chain" id="PRO_0000349859" description="tRNA-specific 2-thiouridylase MnmA">
    <location>
        <begin position="1"/>
        <end position="378"/>
    </location>
</feature>
<feature type="region of interest" description="Interaction with target base in tRNA" evidence="1">
    <location>
        <begin position="94"/>
        <end position="96"/>
    </location>
</feature>
<feature type="region of interest" description="Interaction with tRNA" evidence="1">
    <location>
        <begin position="145"/>
        <end position="147"/>
    </location>
</feature>
<feature type="region of interest" description="Interaction with tRNA" evidence="1">
    <location>
        <begin position="307"/>
        <end position="308"/>
    </location>
</feature>
<feature type="active site" description="Nucleophile" evidence="1">
    <location>
        <position position="99"/>
    </location>
</feature>
<feature type="active site" description="Cysteine persulfide intermediate" evidence="1">
    <location>
        <position position="195"/>
    </location>
</feature>
<feature type="binding site" evidence="1">
    <location>
        <begin position="9"/>
        <end position="16"/>
    </location>
    <ligand>
        <name>ATP</name>
        <dbReference type="ChEBI" id="CHEBI:30616"/>
    </ligand>
</feature>
<feature type="binding site" evidence="1">
    <location>
        <position position="35"/>
    </location>
    <ligand>
        <name>ATP</name>
        <dbReference type="ChEBI" id="CHEBI:30616"/>
    </ligand>
</feature>
<feature type="binding site" evidence="1">
    <location>
        <position position="123"/>
    </location>
    <ligand>
        <name>ATP</name>
        <dbReference type="ChEBI" id="CHEBI:30616"/>
    </ligand>
</feature>
<feature type="site" description="Interaction with tRNA" evidence="1">
    <location>
        <position position="124"/>
    </location>
</feature>
<feature type="site" description="Interaction with tRNA" evidence="1">
    <location>
        <position position="340"/>
    </location>
</feature>
<feature type="disulfide bond" description="Alternate" evidence="1">
    <location>
        <begin position="99"/>
        <end position="195"/>
    </location>
</feature>
<proteinExistence type="inferred from homology"/>
<dbReference type="EC" id="2.8.1.13" evidence="1"/>
<dbReference type="EMBL" id="CP000967">
    <property type="protein sequence ID" value="ACD59137.1"/>
    <property type="molecule type" value="Genomic_DNA"/>
</dbReference>
<dbReference type="EMBL" id="CP000967">
    <property type="protein sequence ID" value="ACD59328.1"/>
    <property type="molecule type" value="Genomic_DNA"/>
</dbReference>
<dbReference type="SMR" id="B2SMD7"/>
<dbReference type="KEGG" id="xop:PXO_01026"/>
<dbReference type="KEGG" id="xop:PXO_06140"/>
<dbReference type="eggNOG" id="COG0482">
    <property type="taxonomic scope" value="Bacteria"/>
</dbReference>
<dbReference type="HOGENOM" id="CLU_035188_1_0_6"/>
<dbReference type="Proteomes" id="UP000001740">
    <property type="component" value="Chromosome"/>
</dbReference>
<dbReference type="GO" id="GO:0005737">
    <property type="term" value="C:cytoplasm"/>
    <property type="evidence" value="ECO:0007669"/>
    <property type="project" value="UniProtKB-SubCell"/>
</dbReference>
<dbReference type="GO" id="GO:0005524">
    <property type="term" value="F:ATP binding"/>
    <property type="evidence" value="ECO:0007669"/>
    <property type="project" value="UniProtKB-KW"/>
</dbReference>
<dbReference type="GO" id="GO:0000049">
    <property type="term" value="F:tRNA binding"/>
    <property type="evidence" value="ECO:0007669"/>
    <property type="project" value="UniProtKB-KW"/>
</dbReference>
<dbReference type="GO" id="GO:0103016">
    <property type="term" value="F:tRNA-uridine 2-sulfurtransferase activity"/>
    <property type="evidence" value="ECO:0007669"/>
    <property type="project" value="UniProtKB-EC"/>
</dbReference>
<dbReference type="GO" id="GO:0002143">
    <property type="term" value="P:tRNA wobble position uridine thiolation"/>
    <property type="evidence" value="ECO:0007669"/>
    <property type="project" value="TreeGrafter"/>
</dbReference>
<dbReference type="CDD" id="cd01998">
    <property type="entry name" value="MnmA_TRMU-like"/>
    <property type="match status" value="1"/>
</dbReference>
<dbReference type="FunFam" id="2.30.30.280:FF:000001">
    <property type="entry name" value="tRNA-specific 2-thiouridylase MnmA"/>
    <property type="match status" value="1"/>
</dbReference>
<dbReference type="FunFam" id="2.40.30.10:FF:000023">
    <property type="entry name" value="tRNA-specific 2-thiouridylase MnmA"/>
    <property type="match status" value="1"/>
</dbReference>
<dbReference type="FunFam" id="3.40.50.620:FF:000004">
    <property type="entry name" value="tRNA-specific 2-thiouridylase MnmA"/>
    <property type="match status" value="1"/>
</dbReference>
<dbReference type="Gene3D" id="2.30.30.280">
    <property type="entry name" value="Adenine nucleotide alpha hydrolases-like domains"/>
    <property type="match status" value="1"/>
</dbReference>
<dbReference type="Gene3D" id="3.40.50.620">
    <property type="entry name" value="HUPs"/>
    <property type="match status" value="1"/>
</dbReference>
<dbReference type="Gene3D" id="2.40.30.10">
    <property type="entry name" value="Translation factors"/>
    <property type="match status" value="1"/>
</dbReference>
<dbReference type="HAMAP" id="MF_00144">
    <property type="entry name" value="tRNA_thiouridyl_MnmA"/>
    <property type="match status" value="1"/>
</dbReference>
<dbReference type="InterPro" id="IPR004506">
    <property type="entry name" value="MnmA-like"/>
</dbReference>
<dbReference type="InterPro" id="IPR046885">
    <property type="entry name" value="MnmA-like_C"/>
</dbReference>
<dbReference type="InterPro" id="IPR046884">
    <property type="entry name" value="MnmA-like_central"/>
</dbReference>
<dbReference type="InterPro" id="IPR023382">
    <property type="entry name" value="MnmA-like_central_sf"/>
</dbReference>
<dbReference type="InterPro" id="IPR014729">
    <property type="entry name" value="Rossmann-like_a/b/a_fold"/>
</dbReference>
<dbReference type="NCBIfam" id="NF001138">
    <property type="entry name" value="PRK00143.1"/>
    <property type="match status" value="1"/>
</dbReference>
<dbReference type="NCBIfam" id="TIGR00420">
    <property type="entry name" value="trmU"/>
    <property type="match status" value="1"/>
</dbReference>
<dbReference type="PANTHER" id="PTHR11933:SF5">
    <property type="entry name" value="MITOCHONDRIAL TRNA-SPECIFIC 2-THIOURIDYLASE 1"/>
    <property type="match status" value="1"/>
</dbReference>
<dbReference type="PANTHER" id="PTHR11933">
    <property type="entry name" value="TRNA 5-METHYLAMINOMETHYL-2-THIOURIDYLATE -METHYLTRANSFERASE"/>
    <property type="match status" value="1"/>
</dbReference>
<dbReference type="Pfam" id="PF03054">
    <property type="entry name" value="tRNA_Me_trans"/>
    <property type="match status" value="1"/>
</dbReference>
<dbReference type="Pfam" id="PF20258">
    <property type="entry name" value="tRNA_Me_trans_C"/>
    <property type="match status" value="1"/>
</dbReference>
<dbReference type="Pfam" id="PF20259">
    <property type="entry name" value="tRNA_Me_trans_M"/>
    <property type="match status" value="1"/>
</dbReference>
<dbReference type="SUPFAM" id="SSF52402">
    <property type="entry name" value="Adenine nucleotide alpha hydrolases-like"/>
    <property type="match status" value="1"/>
</dbReference>